<name>ICSA_ASPFU</name>
<comment type="function">
    <text evidence="1">Isocyanide synthase involved in the biosynthesis of isocyanides (or isonitriles), a class of microbial secondary metabolites. The presence of an isonitrile moiety within a compound imparts unique biological (cytotoxic, antibacterial, and antiprotozoal) and chemical (transition metal coordination) properties and enables synthetic and biochemical applications.</text>
</comment>
<comment type="similarity">
    <text evidence="3">Belongs to the isocyanide synthase family.</text>
</comment>
<feature type="chain" id="PRO_0000445291" description="Isocyanide synthase A">
    <location>
        <begin position="1"/>
        <end position="602"/>
    </location>
</feature>
<keyword id="KW-0560">Oxidoreductase</keyword>
<keyword id="KW-1185">Reference proteome</keyword>
<dbReference type="EC" id="1.-.-.-" evidence="4"/>
<dbReference type="EMBL" id="AAHF01000017">
    <property type="protein sequence ID" value="EAL84283.1"/>
    <property type="molecule type" value="Genomic_DNA"/>
</dbReference>
<dbReference type="RefSeq" id="XP_746321.1">
    <property type="nucleotide sequence ID" value="XM_741228.1"/>
</dbReference>
<dbReference type="SMR" id="Q4W9F7"/>
<dbReference type="STRING" id="330879.Q4W9F7"/>
<dbReference type="EnsemblFungi" id="EAL84283">
    <property type="protein sequence ID" value="EAL84283"/>
    <property type="gene ID" value="AFUA_4G01370"/>
</dbReference>
<dbReference type="GeneID" id="3503829"/>
<dbReference type="KEGG" id="afm:AFUA_4G01370"/>
<dbReference type="VEuPathDB" id="FungiDB:Afu4g01370"/>
<dbReference type="eggNOG" id="ENOG502RNZ1">
    <property type="taxonomic scope" value="Eukaryota"/>
</dbReference>
<dbReference type="HOGENOM" id="CLU_015940_0_0_1"/>
<dbReference type="InParanoid" id="Q4W9F7"/>
<dbReference type="OMA" id="HREHWRV"/>
<dbReference type="OrthoDB" id="429813at2759"/>
<dbReference type="Proteomes" id="UP000002530">
    <property type="component" value="Chromosome 4"/>
</dbReference>
<dbReference type="GO" id="GO:0016491">
    <property type="term" value="F:oxidoreductase activity"/>
    <property type="evidence" value="ECO:0007669"/>
    <property type="project" value="UniProtKB-KW"/>
</dbReference>
<dbReference type="FunFam" id="3.60.130.10:FF:000012">
    <property type="entry name" value="Pyoverdine/dityrosine biosynthesis protein, putative (AFU_orthologue AFUA_5G02660)"/>
    <property type="match status" value="1"/>
</dbReference>
<dbReference type="Gene3D" id="3.60.130.10">
    <property type="entry name" value="Clavaminate synthase-like"/>
    <property type="match status" value="1"/>
</dbReference>
<dbReference type="InterPro" id="IPR007817">
    <property type="entry name" value="Isocyanide_synthase_DIT1"/>
</dbReference>
<dbReference type="InterPro" id="IPR042098">
    <property type="entry name" value="TauD-like_sf"/>
</dbReference>
<dbReference type="InterPro" id="IPR003819">
    <property type="entry name" value="TauD/TfdA-like"/>
</dbReference>
<dbReference type="PANTHER" id="PTHR37285">
    <property type="entry name" value="SPORE WALL MATURATION PROTEIN DIT1"/>
    <property type="match status" value="1"/>
</dbReference>
<dbReference type="PANTHER" id="PTHR37285:SF5">
    <property type="entry name" value="SPORE WALL MATURATION PROTEIN DIT1"/>
    <property type="match status" value="1"/>
</dbReference>
<dbReference type="Pfam" id="PF05141">
    <property type="entry name" value="DIT1_PvcA"/>
    <property type="match status" value="2"/>
</dbReference>
<dbReference type="Pfam" id="PF02668">
    <property type="entry name" value="TauD"/>
    <property type="match status" value="1"/>
</dbReference>
<dbReference type="SUPFAM" id="SSF51197">
    <property type="entry name" value="Clavaminate synthase-like"/>
    <property type="match status" value="1"/>
</dbReference>
<sequence length="602" mass="67705">MPYAGNLPTPTENKVSQIISIISAYRHRSAAVPDRFSEFAPALEKQLTETVSKGEPVRFILPSFPFKAPAEGDKRKTLGSLPDKAEEIALQTLDAFADSIAEIHQPGATVVIVSDASVYGDLLKIPDADAFAYHQELKKLAASLGLTHLEFVRPGTLAGIVPEEAKTLEEYSDHVSKTRNLLDGTLAQAVDPNEDENMRATSKHYDTALPQAEDHEAFKAAMLKRGKAYAKLIASSAESTIRLSIHESNNVGKITMNLFPPPTSPDFITPWHGAVAVLADASVRIVDASTVDRDRFEVITNHEGRPWLLREKSDLFDWFGMELDFEPLFPCGMQVRPKEGYGPYRFEDVNMKLVRRLALSTAPLLLRGFTMQVEKEVFRSKARELGEIQMWPFGDILEVRENADFNMNNVLTREAMPFHYDGVFKTVQDEKTGEWISVPPLFQMFRNRAASQSKGGLTLFASSRNLIPLLGPDSIPLEELRKLQWETFTAANEAFGGHKLQLPFIITHPESGVDTFRFHEPWPESKCVPGSSEPTLVRVVGWPLAESDALCEKLTRLLYDRRVAYRHQWKAGDFIFNDNAMTHHTRTAFEDGHREHWRVHVN</sequence>
<proteinExistence type="inferred from homology"/>
<accession>Q4W9F7</accession>
<organism>
    <name type="scientific">Aspergillus fumigatus (strain ATCC MYA-4609 / CBS 101355 / FGSC A1100 / Af293)</name>
    <name type="common">Neosartorya fumigata</name>
    <dbReference type="NCBI Taxonomy" id="330879"/>
    <lineage>
        <taxon>Eukaryota</taxon>
        <taxon>Fungi</taxon>
        <taxon>Dikarya</taxon>
        <taxon>Ascomycota</taxon>
        <taxon>Pezizomycotina</taxon>
        <taxon>Eurotiomycetes</taxon>
        <taxon>Eurotiomycetidae</taxon>
        <taxon>Eurotiales</taxon>
        <taxon>Aspergillaceae</taxon>
        <taxon>Aspergillus</taxon>
        <taxon>Aspergillus subgen. Fumigati</taxon>
    </lineage>
</organism>
<gene>
    <name evidence="2" type="primary">icsA</name>
    <name type="ORF">AFUA_4G01370</name>
</gene>
<evidence type="ECO:0000269" key="1">
    <source>
    </source>
</evidence>
<evidence type="ECO:0000303" key="2">
    <source>
    </source>
</evidence>
<evidence type="ECO:0000305" key="3"/>
<evidence type="ECO:0000305" key="4">
    <source>
    </source>
</evidence>
<reference key="1">
    <citation type="journal article" date="2005" name="Nature">
        <title>Genomic sequence of the pathogenic and allergenic filamentous fungus Aspergillus fumigatus.</title>
        <authorList>
            <person name="Nierman W.C."/>
            <person name="Pain A."/>
            <person name="Anderson M.J."/>
            <person name="Wortman J.R."/>
            <person name="Kim H.S."/>
            <person name="Arroyo J."/>
            <person name="Berriman M."/>
            <person name="Abe K."/>
            <person name="Archer D.B."/>
            <person name="Bermejo C."/>
            <person name="Bennett J.W."/>
            <person name="Bowyer P."/>
            <person name="Chen D."/>
            <person name="Collins M."/>
            <person name="Coulsen R."/>
            <person name="Davies R."/>
            <person name="Dyer P.S."/>
            <person name="Farman M.L."/>
            <person name="Fedorova N."/>
            <person name="Fedorova N.D."/>
            <person name="Feldblyum T.V."/>
            <person name="Fischer R."/>
            <person name="Fosker N."/>
            <person name="Fraser A."/>
            <person name="Garcia J.L."/>
            <person name="Garcia M.J."/>
            <person name="Goble A."/>
            <person name="Goldman G.H."/>
            <person name="Gomi K."/>
            <person name="Griffith-Jones S."/>
            <person name="Gwilliam R."/>
            <person name="Haas B.J."/>
            <person name="Haas H."/>
            <person name="Harris D.E."/>
            <person name="Horiuchi H."/>
            <person name="Huang J."/>
            <person name="Humphray S."/>
            <person name="Jimenez J."/>
            <person name="Keller N."/>
            <person name="Khouri H."/>
            <person name="Kitamoto K."/>
            <person name="Kobayashi T."/>
            <person name="Konzack S."/>
            <person name="Kulkarni R."/>
            <person name="Kumagai T."/>
            <person name="Lafton A."/>
            <person name="Latge J.-P."/>
            <person name="Li W."/>
            <person name="Lord A."/>
            <person name="Lu C."/>
            <person name="Majoros W.H."/>
            <person name="May G.S."/>
            <person name="Miller B.L."/>
            <person name="Mohamoud Y."/>
            <person name="Molina M."/>
            <person name="Monod M."/>
            <person name="Mouyna I."/>
            <person name="Mulligan S."/>
            <person name="Murphy L.D."/>
            <person name="O'Neil S."/>
            <person name="Paulsen I."/>
            <person name="Penalva M.A."/>
            <person name="Pertea M."/>
            <person name="Price C."/>
            <person name="Pritchard B.L."/>
            <person name="Quail M.A."/>
            <person name="Rabbinowitsch E."/>
            <person name="Rawlins N."/>
            <person name="Rajandream M.A."/>
            <person name="Reichard U."/>
            <person name="Renauld H."/>
            <person name="Robson G.D."/>
            <person name="Rodriguez de Cordoba S."/>
            <person name="Rodriguez-Pena J.M."/>
            <person name="Ronning C.M."/>
            <person name="Rutter S."/>
            <person name="Salzberg S.L."/>
            <person name="Sanchez M."/>
            <person name="Sanchez-Ferrero J.C."/>
            <person name="Saunders D."/>
            <person name="Seeger K."/>
            <person name="Squares R."/>
            <person name="Squares S."/>
            <person name="Takeuchi M."/>
            <person name="Tekaia F."/>
            <person name="Turner G."/>
            <person name="Vazquez de Aldana C.R."/>
            <person name="Weidman J."/>
            <person name="White O."/>
            <person name="Woodward J.R."/>
            <person name="Yu J.-H."/>
            <person name="Fraser C.M."/>
            <person name="Galagan J.E."/>
            <person name="Asai K."/>
            <person name="Machida M."/>
            <person name="Hall N."/>
            <person name="Barrell B.G."/>
            <person name="Denning D.W."/>
        </authorList>
    </citation>
    <scope>NUCLEOTIDE SEQUENCE [LARGE SCALE GENOMIC DNA]</scope>
    <source>
        <strain>ATCC MYA-4609 / CBS 101355 / FGSC A1100 / Af293</strain>
    </source>
</reference>
<reference key="2">
    <citation type="journal article" date="2018" name="MBio">
        <title>Fungal isocyanide synthases and xanthocillin biosynthesis in Aspergillus fumigatus.</title>
        <authorList>
            <person name="Lim F.Y."/>
            <person name="Won T.H."/>
            <person name="Raffa N."/>
            <person name="Baccile J.A."/>
            <person name="Wisecaver J."/>
            <person name="Rokas A."/>
            <person name="Schroeder F.C."/>
            <person name="Keller N.P."/>
        </authorList>
    </citation>
    <scope>FUNCTION</scope>
</reference>
<protein>
    <recommendedName>
        <fullName evidence="2">Isocyanide synthase A</fullName>
        <shortName evidence="2">ICS A</shortName>
        <ecNumber evidence="4">1.-.-.-</ecNumber>
    </recommendedName>
</protein>